<evidence type="ECO:0000255" key="1">
    <source>
        <dbReference type="HAMAP-Rule" id="MF_00158"/>
    </source>
</evidence>
<dbReference type="EC" id="6.3.2.1" evidence="1"/>
<dbReference type="EMBL" id="CP000151">
    <property type="protein sequence ID" value="ABB09367.1"/>
    <property type="molecule type" value="Genomic_DNA"/>
</dbReference>
<dbReference type="RefSeq" id="WP_011352891.1">
    <property type="nucleotide sequence ID" value="NC_007510.1"/>
</dbReference>
<dbReference type="SMR" id="Q39DU9"/>
<dbReference type="GeneID" id="45095657"/>
<dbReference type="KEGG" id="bur:Bcep18194_A5773"/>
<dbReference type="PATRIC" id="fig|482957.22.peg.2756"/>
<dbReference type="HOGENOM" id="CLU_047148_0_0_4"/>
<dbReference type="UniPathway" id="UPA00028">
    <property type="reaction ID" value="UER00005"/>
</dbReference>
<dbReference type="Proteomes" id="UP000002705">
    <property type="component" value="Chromosome 1"/>
</dbReference>
<dbReference type="GO" id="GO:0005829">
    <property type="term" value="C:cytosol"/>
    <property type="evidence" value="ECO:0007669"/>
    <property type="project" value="TreeGrafter"/>
</dbReference>
<dbReference type="GO" id="GO:0005524">
    <property type="term" value="F:ATP binding"/>
    <property type="evidence" value="ECO:0007669"/>
    <property type="project" value="UniProtKB-KW"/>
</dbReference>
<dbReference type="GO" id="GO:0004592">
    <property type="term" value="F:pantoate-beta-alanine ligase activity"/>
    <property type="evidence" value="ECO:0007669"/>
    <property type="project" value="UniProtKB-UniRule"/>
</dbReference>
<dbReference type="GO" id="GO:0015940">
    <property type="term" value="P:pantothenate biosynthetic process"/>
    <property type="evidence" value="ECO:0007669"/>
    <property type="project" value="UniProtKB-UniRule"/>
</dbReference>
<dbReference type="CDD" id="cd00560">
    <property type="entry name" value="PanC"/>
    <property type="match status" value="1"/>
</dbReference>
<dbReference type="Gene3D" id="3.40.50.620">
    <property type="entry name" value="HUPs"/>
    <property type="match status" value="1"/>
</dbReference>
<dbReference type="Gene3D" id="3.30.1300.10">
    <property type="entry name" value="Pantoate-beta-alanine ligase, C-terminal domain"/>
    <property type="match status" value="1"/>
</dbReference>
<dbReference type="HAMAP" id="MF_00158">
    <property type="entry name" value="PanC"/>
    <property type="match status" value="1"/>
</dbReference>
<dbReference type="InterPro" id="IPR004821">
    <property type="entry name" value="Cyt_trans-like"/>
</dbReference>
<dbReference type="InterPro" id="IPR003721">
    <property type="entry name" value="Pantoate_ligase"/>
</dbReference>
<dbReference type="InterPro" id="IPR042176">
    <property type="entry name" value="Pantoate_ligase_C"/>
</dbReference>
<dbReference type="InterPro" id="IPR014729">
    <property type="entry name" value="Rossmann-like_a/b/a_fold"/>
</dbReference>
<dbReference type="NCBIfam" id="TIGR00125">
    <property type="entry name" value="cyt_tran_rel"/>
    <property type="match status" value="1"/>
</dbReference>
<dbReference type="NCBIfam" id="TIGR00018">
    <property type="entry name" value="panC"/>
    <property type="match status" value="1"/>
</dbReference>
<dbReference type="PANTHER" id="PTHR21299">
    <property type="entry name" value="CYTIDYLATE KINASE/PANTOATE-BETA-ALANINE LIGASE"/>
    <property type="match status" value="1"/>
</dbReference>
<dbReference type="PANTHER" id="PTHR21299:SF1">
    <property type="entry name" value="PANTOATE--BETA-ALANINE LIGASE"/>
    <property type="match status" value="1"/>
</dbReference>
<dbReference type="Pfam" id="PF02569">
    <property type="entry name" value="Pantoate_ligase"/>
    <property type="match status" value="1"/>
</dbReference>
<dbReference type="SUPFAM" id="SSF52374">
    <property type="entry name" value="Nucleotidylyl transferase"/>
    <property type="match status" value="1"/>
</dbReference>
<keyword id="KW-0067">ATP-binding</keyword>
<keyword id="KW-0963">Cytoplasm</keyword>
<keyword id="KW-0436">Ligase</keyword>
<keyword id="KW-0547">Nucleotide-binding</keyword>
<keyword id="KW-0566">Pantothenate biosynthesis</keyword>
<protein>
    <recommendedName>
        <fullName evidence="1">Pantothenate synthetase</fullName>
        <shortName evidence="1">PS</shortName>
        <ecNumber evidence="1">6.3.2.1</ecNumber>
    </recommendedName>
    <alternativeName>
        <fullName evidence="1">Pantoate--beta-alanine ligase</fullName>
    </alternativeName>
    <alternativeName>
        <fullName evidence="1">Pantoate-activating enzyme</fullName>
    </alternativeName>
</protein>
<feature type="chain" id="PRO_0000305417" description="Pantothenate synthetase">
    <location>
        <begin position="1"/>
        <end position="279"/>
    </location>
</feature>
<feature type="active site" description="Proton donor" evidence="1">
    <location>
        <position position="33"/>
    </location>
</feature>
<feature type="binding site" evidence="1">
    <location>
        <begin position="26"/>
        <end position="33"/>
    </location>
    <ligand>
        <name>ATP</name>
        <dbReference type="ChEBI" id="CHEBI:30616"/>
    </ligand>
</feature>
<feature type="binding site" evidence="1">
    <location>
        <position position="57"/>
    </location>
    <ligand>
        <name>(R)-pantoate</name>
        <dbReference type="ChEBI" id="CHEBI:15980"/>
    </ligand>
</feature>
<feature type="binding site" evidence="1">
    <location>
        <position position="57"/>
    </location>
    <ligand>
        <name>beta-alanine</name>
        <dbReference type="ChEBI" id="CHEBI:57966"/>
    </ligand>
</feature>
<feature type="binding site" evidence="1">
    <location>
        <begin position="144"/>
        <end position="147"/>
    </location>
    <ligand>
        <name>ATP</name>
        <dbReference type="ChEBI" id="CHEBI:30616"/>
    </ligand>
</feature>
<feature type="binding site" evidence="1">
    <location>
        <position position="150"/>
    </location>
    <ligand>
        <name>(R)-pantoate</name>
        <dbReference type="ChEBI" id="CHEBI:15980"/>
    </ligand>
</feature>
<feature type="binding site" evidence="1">
    <location>
        <position position="173"/>
    </location>
    <ligand>
        <name>ATP</name>
        <dbReference type="ChEBI" id="CHEBI:30616"/>
    </ligand>
</feature>
<feature type="binding site" evidence="1">
    <location>
        <begin position="181"/>
        <end position="184"/>
    </location>
    <ligand>
        <name>ATP</name>
        <dbReference type="ChEBI" id="CHEBI:30616"/>
    </ligand>
</feature>
<reference key="1">
    <citation type="submission" date="2005-10" db="EMBL/GenBank/DDBJ databases">
        <title>Complete sequence of chromosome 1 of Burkholderia sp. 383.</title>
        <authorList>
            <consortium name="US DOE Joint Genome Institute"/>
            <person name="Copeland A."/>
            <person name="Lucas S."/>
            <person name="Lapidus A."/>
            <person name="Barry K."/>
            <person name="Detter J.C."/>
            <person name="Glavina T."/>
            <person name="Hammon N."/>
            <person name="Israni S."/>
            <person name="Pitluck S."/>
            <person name="Chain P."/>
            <person name="Malfatti S."/>
            <person name="Shin M."/>
            <person name="Vergez L."/>
            <person name="Schmutz J."/>
            <person name="Larimer F."/>
            <person name="Land M."/>
            <person name="Kyrpides N."/>
            <person name="Lykidis A."/>
            <person name="Richardson P."/>
        </authorList>
    </citation>
    <scope>NUCLEOTIDE SEQUENCE [LARGE SCALE GENOMIC DNA]</scope>
    <source>
        <strain>ATCC 17760 / DSM 23089 / LMG 22485 / NCIMB 9086 / R18194 / 383</strain>
    </source>
</reference>
<comment type="function">
    <text evidence="1">Catalyzes the condensation of pantoate with beta-alanine in an ATP-dependent reaction via a pantoyl-adenylate intermediate.</text>
</comment>
<comment type="catalytic activity">
    <reaction evidence="1">
        <text>(R)-pantoate + beta-alanine + ATP = (R)-pantothenate + AMP + diphosphate + H(+)</text>
        <dbReference type="Rhea" id="RHEA:10912"/>
        <dbReference type="ChEBI" id="CHEBI:15378"/>
        <dbReference type="ChEBI" id="CHEBI:15980"/>
        <dbReference type="ChEBI" id="CHEBI:29032"/>
        <dbReference type="ChEBI" id="CHEBI:30616"/>
        <dbReference type="ChEBI" id="CHEBI:33019"/>
        <dbReference type="ChEBI" id="CHEBI:57966"/>
        <dbReference type="ChEBI" id="CHEBI:456215"/>
        <dbReference type="EC" id="6.3.2.1"/>
    </reaction>
</comment>
<comment type="pathway">
    <text evidence="1">Cofactor biosynthesis; (R)-pantothenate biosynthesis; (R)-pantothenate from (R)-pantoate and beta-alanine: step 1/1.</text>
</comment>
<comment type="subunit">
    <text evidence="1">Homodimer.</text>
</comment>
<comment type="subcellular location">
    <subcellularLocation>
        <location evidence="1">Cytoplasm</location>
    </subcellularLocation>
</comment>
<comment type="miscellaneous">
    <text evidence="1">The reaction proceeds by a bi uni uni bi ping pong mechanism.</text>
</comment>
<comment type="similarity">
    <text evidence="1">Belongs to the pantothenate synthetase family.</text>
</comment>
<gene>
    <name evidence="1" type="primary">panC</name>
    <name type="ordered locus">Bcep18194_A5773</name>
</gene>
<name>PANC_BURL3</name>
<organism>
    <name type="scientific">Burkholderia lata (strain ATCC 17760 / DSM 23089 / LMG 22485 / NCIMB 9086 / R18194 / 383)</name>
    <dbReference type="NCBI Taxonomy" id="482957"/>
    <lineage>
        <taxon>Bacteria</taxon>
        <taxon>Pseudomonadati</taxon>
        <taxon>Pseudomonadota</taxon>
        <taxon>Betaproteobacteria</taxon>
        <taxon>Burkholderiales</taxon>
        <taxon>Burkholderiaceae</taxon>
        <taxon>Burkholderia</taxon>
        <taxon>Burkholderia cepacia complex</taxon>
    </lineage>
</organism>
<accession>Q39DU9</accession>
<sequence length="279" mass="31343">MKVISSIHELRDQLRGQNRTAFVPTMGNLHEGHLSLMRLARQHGDPVVASIFVNRLQFGPNEDFDKYPRTLQDDIEKLQKENVYVLFAPTERDMYPEPQEYRVLPPDDLGGILEGEFRPGFFTGVCTVVTKLMACVQPRVAVFGKKDYQQLMIVRRMCQQLALPVDIIAAETVRDEDGLALSSRNRYLSADERSEAPELAKTLQRIRESVLGGEHDLGKLEEMARTHLAGRGWAPDYISIRRRANLIAPDAAQLEAGEPLVVVAAAKLGATRLIDNLEI</sequence>
<proteinExistence type="inferred from homology"/>